<evidence type="ECO:0000255" key="1">
    <source>
        <dbReference type="HAMAP-Rule" id="MF_00179"/>
    </source>
</evidence>
<evidence type="ECO:0000305" key="2"/>
<proteinExistence type="inferred from homology"/>
<gene>
    <name evidence="1" type="primary">ribA</name>
    <name type="ordered locus">YPO2222</name>
    <name type="ordered locus">y2064</name>
    <name type="ordered locus">YP_2020</name>
</gene>
<name>RIBA_YERPE</name>
<comment type="function">
    <text evidence="1">Catalyzes the conversion of GTP to 2,5-diamino-6-ribosylamino-4(3H)-pyrimidinone 5'-phosphate (DARP), formate and pyrophosphate.</text>
</comment>
<comment type="catalytic activity">
    <reaction evidence="1">
        <text>GTP + 4 H2O = 2,5-diamino-6-hydroxy-4-(5-phosphoribosylamino)-pyrimidine + formate + 2 phosphate + 3 H(+)</text>
        <dbReference type="Rhea" id="RHEA:23704"/>
        <dbReference type="ChEBI" id="CHEBI:15377"/>
        <dbReference type="ChEBI" id="CHEBI:15378"/>
        <dbReference type="ChEBI" id="CHEBI:15740"/>
        <dbReference type="ChEBI" id="CHEBI:37565"/>
        <dbReference type="ChEBI" id="CHEBI:43474"/>
        <dbReference type="ChEBI" id="CHEBI:58614"/>
        <dbReference type="EC" id="3.5.4.25"/>
    </reaction>
</comment>
<comment type="cofactor">
    <cofactor evidence="1">
        <name>Zn(2+)</name>
        <dbReference type="ChEBI" id="CHEBI:29105"/>
    </cofactor>
    <text evidence="1">Binds 1 zinc ion per subunit.</text>
</comment>
<comment type="pathway">
    <text evidence="1">Cofactor biosynthesis; riboflavin biosynthesis; 5-amino-6-(D-ribitylamino)uracil from GTP: step 1/4.</text>
</comment>
<comment type="subunit">
    <text evidence="1">Homodimer.</text>
</comment>
<comment type="similarity">
    <text evidence="1">Belongs to the GTP cyclohydrolase II family.</text>
</comment>
<comment type="sequence caution" evidence="2">
    <conflict type="erroneous initiation">
        <sequence resource="EMBL-CDS" id="AAM85628"/>
    </conflict>
</comment>
<comment type="sequence caution" evidence="2">
    <conflict type="erroneous initiation">
        <sequence resource="EMBL-CDS" id="AAS62236"/>
    </conflict>
</comment>
<dbReference type="EC" id="3.5.4.25" evidence="1"/>
<dbReference type="EMBL" id="AL590842">
    <property type="protein sequence ID" value="CAL20852.1"/>
    <property type="molecule type" value="Genomic_DNA"/>
</dbReference>
<dbReference type="EMBL" id="AE009952">
    <property type="protein sequence ID" value="AAM85628.1"/>
    <property type="status" value="ALT_INIT"/>
    <property type="molecule type" value="Genomic_DNA"/>
</dbReference>
<dbReference type="EMBL" id="AE017042">
    <property type="protein sequence ID" value="AAS62236.1"/>
    <property type="status" value="ALT_INIT"/>
    <property type="molecule type" value="Genomic_DNA"/>
</dbReference>
<dbReference type="PIR" id="AI0270">
    <property type="entry name" value="AI0270"/>
</dbReference>
<dbReference type="RefSeq" id="WP_002227926.1">
    <property type="nucleotide sequence ID" value="NZ_WUCM01000001.1"/>
</dbReference>
<dbReference type="RefSeq" id="YP_002347194.1">
    <property type="nucleotide sequence ID" value="NC_003143.1"/>
</dbReference>
<dbReference type="SMR" id="Q8ZEF0"/>
<dbReference type="STRING" id="214092.YPO2222"/>
<dbReference type="PaxDb" id="214092-YPO2222"/>
<dbReference type="DNASU" id="1147011"/>
<dbReference type="EnsemblBacteria" id="AAS62236">
    <property type="protein sequence ID" value="AAS62236"/>
    <property type="gene ID" value="YP_2020"/>
</dbReference>
<dbReference type="GeneID" id="57976446"/>
<dbReference type="KEGG" id="ype:YPO2222"/>
<dbReference type="KEGG" id="ypj:CH55_313"/>
<dbReference type="KEGG" id="ypk:y2064"/>
<dbReference type="KEGG" id="ypl:CH46_2891"/>
<dbReference type="KEGG" id="ypm:YP_2020"/>
<dbReference type="KEGG" id="ypv:BZ15_1318"/>
<dbReference type="KEGG" id="ypw:CH59_3898"/>
<dbReference type="PATRIC" id="fig|214092.21.peg.2618"/>
<dbReference type="eggNOG" id="COG0807">
    <property type="taxonomic scope" value="Bacteria"/>
</dbReference>
<dbReference type="HOGENOM" id="CLU_020273_2_1_6"/>
<dbReference type="OrthoDB" id="9793111at2"/>
<dbReference type="UniPathway" id="UPA00275">
    <property type="reaction ID" value="UER00400"/>
</dbReference>
<dbReference type="Proteomes" id="UP000000815">
    <property type="component" value="Chromosome"/>
</dbReference>
<dbReference type="Proteomes" id="UP000001019">
    <property type="component" value="Chromosome"/>
</dbReference>
<dbReference type="Proteomes" id="UP000002490">
    <property type="component" value="Chromosome"/>
</dbReference>
<dbReference type="GO" id="GO:0005829">
    <property type="term" value="C:cytosol"/>
    <property type="evidence" value="ECO:0000318"/>
    <property type="project" value="GO_Central"/>
</dbReference>
<dbReference type="GO" id="GO:0005525">
    <property type="term" value="F:GTP binding"/>
    <property type="evidence" value="ECO:0007669"/>
    <property type="project" value="UniProtKB-KW"/>
</dbReference>
<dbReference type="GO" id="GO:0003935">
    <property type="term" value="F:GTP cyclohydrolase II activity"/>
    <property type="evidence" value="ECO:0000318"/>
    <property type="project" value="GO_Central"/>
</dbReference>
<dbReference type="GO" id="GO:0008270">
    <property type="term" value="F:zinc ion binding"/>
    <property type="evidence" value="ECO:0007669"/>
    <property type="project" value="UniProtKB-UniRule"/>
</dbReference>
<dbReference type="GO" id="GO:0009231">
    <property type="term" value="P:riboflavin biosynthetic process"/>
    <property type="evidence" value="ECO:0000318"/>
    <property type="project" value="GO_Central"/>
</dbReference>
<dbReference type="CDD" id="cd00641">
    <property type="entry name" value="GTP_cyclohydro2"/>
    <property type="match status" value="1"/>
</dbReference>
<dbReference type="FunFam" id="3.40.50.10990:FF:000002">
    <property type="entry name" value="GTP cyclohydrolase-2"/>
    <property type="match status" value="1"/>
</dbReference>
<dbReference type="Gene3D" id="3.40.50.10990">
    <property type="entry name" value="GTP cyclohydrolase II"/>
    <property type="match status" value="1"/>
</dbReference>
<dbReference type="HAMAP" id="MF_00179">
    <property type="entry name" value="RibA"/>
    <property type="match status" value="1"/>
</dbReference>
<dbReference type="InterPro" id="IPR032677">
    <property type="entry name" value="GTP_cyclohydro_II"/>
</dbReference>
<dbReference type="InterPro" id="IPR000926">
    <property type="entry name" value="RibA"/>
</dbReference>
<dbReference type="InterPro" id="IPR036144">
    <property type="entry name" value="RibA-like_sf"/>
</dbReference>
<dbReference type="NCBIfam" id="NF001591">
    <property type="entry name" value="PRK00393.1"/>
    <property type="match status" value="1"/>
</dbReference>
<dbReference type="NCBIfam" id="TIGR00505">
    <property type="entry name" value="ribA"/>
    <property type="match status" value="1"/>
</dbReference>
<dbReference type="PANTHER" id="PTHR21327:SF18">
    <property type="entry name" value="3,4-DIHYDROXY-2-BUTANONE 4-PHOSPHATE SYNTHASE"/>
    <property type="match status" value="1"/>
</dbReference>
<dbReference type="PANTHER" id="PTHR21327">
    <property type="entry name" value="GTP CYCLOHYDROLASE II-RELATED"/>
    <property type="match status" value="1"/>
</dbReference>
<dbReference type="Pfam" id="PF00925">
    <property type="entry name" value="GTP_cyclohydro2"/>
    <property type="match status" value="1"/>
</dbReference>
<dbReference type="SUPFAM" id="SSF142695">
    <property type="entry name" value="RibA-like"/>
    <property type="match status" value="1"/>
</dbReference>
<organism>
    <name type="scientific">Yersinia pestis</name>
    <dbReference type="NCBI Taxonomy" id="632"/>
    <lineage>
        <taxon>Bacteria</taxon>
        <taxon>Pseudomonadati</taxon>
        <taxon>Pseudomonadota</taxon>
        <taxon>Gammaproteobacteria</taxon>
        <taxon>Enterobacterales</taxon>
        <taxon>Yersiniaceae</taxon>
        <taxon>Yersinia</taxon>
    </lineage>
</organism>
<sequence>MQLKRVAEAKLPTPWGDFLMVGFEELATGHDHLALIFGDISGDKPVLSRVHSECLTGDALFSLRCDCGFQLEVALTRIAEEGRGVLIYHRQEGRNIGLLNKIRAYALQDLGADTVEANHQLGFAADERDFTLCSDMYKLLGIKAVRLLTNNPKKVEILTQAGINIVERVPLIVGENPKNEHYLATKAAKMGHLLTK</sequence>
<accession>Q8ZEF0</accession>
<accession>Q0WEU4</accession>
<accession>Q8D0J4</accession>
<keyword id="KW-0342">GTP-binding</keyword>
<keyword id="KW-0378">Hydrolase</keyword>
<keyword id="KW-0479">Metal-binding</keyword>
<keyword id="KW-0547">Nucleotide-binding</keyword>
<keyword id="KW-1185">Reference proteome</keyword>
<keyword id="KW-0686">Riboflavin biosynthesis</keyword>
<keyword id="KW-0862">Zinc</keyword>
<protein>
    <recommendedName>
        <fullName evidence="1">GTP cyclohydrolase-2</fullName>
        <ecNumber evidence="1">3.5.4.25</ecNumber>
    </recommendedName>
    <alternativeName>
        <fullName evidence="1">GTP cyclohydrolase II</fullName>
    </alternativeName>
</protein>
<reference key="1">
    <citation type="journal article" date="2001" name="Nature">
        <title>Genome sequence of Yersinia pestis, the causative agent of plague.</title>
        <authorList>
            <person name="Parkhill J."/>
            <person name="Wren B.W."/>
            <person name="Thomson N.R."/>
            <person name="Titball R.W."/>
            <person name="Holden M.T.G."/>
            <person name="Prentice M.B."/>
            <person name="Sebaihia M."/>
            <person name="James K.D."/>
            <person name="Churcher C.M."/>
            <person name="Mungall K.L."/>
            <person name="Baker S."/>
            <person name="Basham D."/>
            <person name="Bentley S.D."/>
            <person name="Brooks K."/>
            <person name="Cerdeno-Tarraga A.-M."/>
            <person name="Chillingworth T."/>
            <person name="Cronin A."/>
            <person name="Davies R.M."/>
            <person name="Davis P."/>
            <person name="Dougan G."/>
            <person name="Feltwell T."/>
            <person name="Hamlin N."/>
            <person name="Holroyd S."/>
            <person name="Jagels K."/>
            <person name="Karlyshev A.V."/>
            <person name="Leather S."/>
            <person name="Moule S."/>
            <person name="Oyston P.C.F."/>
            <person name="Quail M.A."/>
            <person name="Rutherford K.M."/>
            <person name="Simmonds M."/>
            <person name="Skelton J."/>
            <person name="Stevens K."/>
            <person name="Whitehead S."/>
            <person name="Barrell B.G."/>
        </authorList>
    </citation>
    <scope>NUCLEOTIDE SEQUENCE [LARGE SCALE GENOMIC DNA]</scope>
    <source>
        <strain>CO-92 / Biovar Orientalis</strain>
    </source>
</reference>
<reference key="2">
    <citation type="journal article" date="2002" name="J. Bacteriol.">
        <title>Genome sequence of Yersinia pestis KIM.</title>
        <authorList>
            <person name="Deng W."/>
            <person name="Burland V."/>
            <person name="Plunkett G. III"/>
            <person name="Boutin A."/>
            <person name="Mayhew G.F."/>
            <person name="Liss P."/>
            <person name="Perna N.T."/>
            <person name="Rose D.J."/>
            <person name="Mau B."/>
            <person name="Zhou S."/>
            <person name="Schwartz D.C."/>
            <person name="Fetherston J.D."/>
            <person name="Lindler L.E."/>
            <person name="Brubaker R.R."/>
            <person name="Plano G.V."/>
            <person name="Straley S.C."/>
            <person name="McDonough K.A."/>
            <person name="Nilles M.L."/>
            <person name="Matson J.S."/>
            <person name="Blattner F.R."/>
            <person name="Perry R.D."/>
        </authorList>
    </citation>
    <scope>NUCLEOTIDE SEQUENCE [LARGE SCALE GENOMIC DNA]</scope>
    <source>
        <strain>KIM10+ / Biovar Mediaevalis</strain>
    </source>
</reference>
<reference key="3">
    <citation type="journal article" date="2004" name="DNA Res.">
        <title>Complete genome sequence of Yersinia pestis strain 91001, an isolate avirulent to humans.</title>
        <authorList>
            <person name="Song Y."/>
            <person name="Tong Z."/>
            <person name="Wang J."/>
            <person name="Wang L."/>
            <person name="Guo Z."/>
            <person name="Han Y."/>
            <person name="Zhang J."/>
            <person name="Pei D."/>
            <person name="Zhou D."/>
            <person name="Qin H."/>
            <person name="Pang X."/>
            <person name="Han Y."/>
            <person name="Zhai J."/>
            <person name="Li M."/>
            <person name="Cui B."/>
            <person name="Qi Z."/>
            <person name="Jin L."/>
            <person name="Dai R."/>
            <person name="Chen F."/>
            <person name="Li S."/>
            <person name="Ye C."/>
            <person name="Du Z."/>
            <person name="Lin W."/>
            <person name="Wang J."/>
            <person name="Yu J."/>
            <person name="Yang H."/>
            <person name="Wang J."/>
            <person name="Huang P."/>
            <person name="Yang R."/>
        </authorList>
    </citation>
    <scope>NUCLEOTIDE SEQUENCE [LARGE SCALE GENOMIC DNA]</scope>
    <source>
        <strain>91001 / Biovar Mediaevalis</strain>
    </source>
</reference>
<feature type="chain" id="PRO_0000151782" description="GTP cyclohydrolase-2">
    <location>
        <begin position="1"/>
        <end position="196"/>
    </location>
</feature>
<feature type="active site" description="Proton acceptor" evidence="1">
    <location>
        <position position="126"/>
    </location>
</feature>
<feature type="active site" description="Nucleophile" evidence="1">
    <location>
        <position position="128"/>
    </location>
</feature>
<feature type="binding site" evidence="1">
    <location>
        <begin position="49"/>
        <end position="53"/>
    </location>
    <ligand>
        <name>GTP</name>
        <dbReference type="ChEBI" id="CHEBI:37565"/>
    </ligand>
</feature>
<feature type="binding site" evidence="1">
    <location>
        <position position="54"/>
    </location>
    <ligand>
        <name>Zn(2+)</name>
        <dbReference type="ChEBI" id="CHEBI:29105"/>
        <note>catalytic</note>
    </ligand>
</feature>
<feature type="binding site" evidence="1">
    <location>
        <position position="65"/>
    </location>
    <ligand>
        <name>Zn(2+)</name>
        <dbReference type="ChEBI" id="CHEBI:29105"/>
        <note>catalytic</note>
    </ligand>
</feature>
<feature type="binding site" evidence="1">
    <location>
        <position position="67"/>
    </location>
    <ligand>
        <name>Zn(2+)</name>
        <dbReference type="ChEBI" id="CHEBI:29105"/>
        <note>catalytic</note>
    </ligand>
</feature>
<feature type="binding site" evidence="1">
    <location>
        <position position="70"/>
    </location>
    <ligand>
        <name>GTP</name>
        <dbReference type="ChEBI" id="CHEBI:37565"/>
    </ligand>
</feature>
<feature type="binding site" evidence="1">
    <location>
        <begin position="92"/>
        <end position="94"/>
    </location>
    <ligand>
        <name>GTP</name>
        <dbReference type="ChEBI" id="CHEBI:37565"/>
    </ligand>
</feature>
<feature type="binding site" evidence="1">
    <location>
        <position position="114"/>
    </location>
    <ligand>
        <name>GTP</name>
        <dbReference type="ChEBI" id="CHEBI:37565"/>
    </ligand>
</feature>
<feature type="binding site" evidence="1">
    <location>
        <position position="149"/>
    </location>
    <ligand>
        <name>GTP</name>
        <dbReference type="ChEBI" id="CHEBI:37565"/>
    </ligand>
</feature>
<feature type="binding site" evidence="1">
    <location>
        <position position="154"/>
    </location>
    <ligand>
        <name>GTP</name>
        <dbReference type="ChEBI" id="CHEBI:37565"/>
    </ligand>
</feature>